<comment type="function">
    <text evidence="2 8 9">RNA-binding protein that binds to misfolded non-coding RNAs, pre-5S rRNA, and several small cytoplasmic RNA molecules known as Y RNAs (PubMed:18056422, PubMed:26382853). Binds to endogenous Alu retroelements which are induced by type I interferon and stimulate porinflammatory cytokine secretion (PubMed:26382853). Regulates the expression of Alu retroelements as well as inflammatory genes (PubMed:26382853). May play roles in cilia formation and/or maintenance (By similarity).</text>
</comment>
<comment type="subunit">
    <text evidence="5 6 7">Identified in a IGF2BP1-dependent mRNP granule complex containing untranslated mRNAs (PubMed:17289661). Found in a complex with PUF60 and Y5 RNA (PubMed:10668799). Interacts with RAB11FIP5 (PubMed:10545525).</text>
</comment>
<comment type="subcellular location">
    <subcellularLocation>
        <location evidence="7">Cytoplasm</location>
    </subcellularLocation>
    <text evidence="7">Localized in cytoplasmic mRNP granules containing untranslated mRNAs.</text>
</comment>
<comment type="alternative products">
    <event type="alternative splicing"/>
    <isoform>
        <id>P10155-1</id>
        <name>Long</name>
        <sequence type="displayed"/>
    </isoform>
    <isoform>
        <id>P10155-2</id>
        <name>Short</name>
        <name>60E2</name>
        <sequence type="described" ref="VSP_005911 VSP_005912"/>
    </isoform>
    <isoform>
        <id>P10155-3</id>
        <name>3</name>
        <sequence type="described" ref="VSP_045262"/>
    </isoform>
    <isoform>
        <id>P10155-4</id>
        <name>4</name>
        <sequence type="described" ref="VSP_045797"/>
    </isoform>
    <isoform>
        <id>P10155-5</id>
        <name>5</name>
        <sequence type="described" ref="VSP_054041"/>
    </isoform>
</comment>
<comment type="domain">
    <text evidence="3">The horseshoe-shaped TROVE domain is built with 7 helical HEAT-like repeats, and is closed by the VWFA-like domain giving rise to a ring-shaped monomer. Single-stranded RNA is bound in the positively charged central cavity (By similarity).</text>
</comment>
<comment type="domain">
    <text evidence="3">The MIDAS-like motif in the VWFA-like domain binds divalent metal cations.</text>
</comment>
<comment type="miscellaneous">
    <text>Antibodies against normal cellular SSA2 protein are found in sera from patients with systemic lupus erythematosus (SLE).</text>
</comment>
<comment type="similarity">
    <text evidence="14">Belongs to the Ro 60 kDa family.</text>
</comment>
<dbReference type="EMBL" id="J04137">
    <property type="protein sequence ID" value="AAA35493.1"/>
    <property type="molecule type" value="mRNA"/>
</dbReference>
<dbReference type="EMBL" id="M25077">
    <property type="protein sequence ID" value="AAA35532.1"/>
    <property type="molecule type" value="mRNA"/>
</dbReference>
<dbReference type="EMBL" id="U44388">
    <property type="protein sequence ID" value="AAB81552.1"/>
    <property type="status" value="ALT_TERM"/>
    <property type="molecule type" value="Genomic_DNA"/>
</dbReference>
<dbReference type="EMBL" id="U44388">
    <property type="protein sequence ID" value="AAB81553.1"/>
    <property type="molecule type" value="Genomic_DNA"/>
</dbReference>
<dbReference type="EMBL" id="AY205314">
    <property type="protein sequence ID" value="AAO47001.1"/>
    <property type="molecule type" value="mRNA"/>
</dbReference>
<dbReference type="EMBL" id="AY205315">
    <property type="protein sequence ID" value="AAO47002.1"/>
    <property type="molecule type" value="mRNA"/>
</dbReference>
<dbReference type="EMBL" id="AK314594">
    <property type="protein sequence ID" value="BAG37166.1"/>
    <property type="molecule type" value="mRNA"/>
</dbReference>
<dbReference type="EMBL" id="AL136370">
    <property type="status" value="NOT_ANNOTATED_CDS"/>
    <property type="molecule type" value="Genomic_DNA"/>
</dbReference>
<dbReference type="EMBL" id="CH471067">
    <property type="protein sequence ID" value="EAW91240.1"/>
    <property type="molecule type" value="Genomic_DNA"/>
</dbReference>
<dbReference type="EMBL" id="CH471067">
    <property type="protein sequence ID" value="EAW91243.1"/>
    <property type="molecule type" value="Genomic_DNA"/>
</dbReference>
<dbReference type="EMBL" id="CH471067">
    <property type="protein sequence ID" value="EAW91245.1"/>
    <property type="molecule type" value="Genomic_DNA"/>
</dbReference>
<dbReference type="EMBL" id="CH471067">
    <property type="protein sequence ID" value="EAW91247.1"/>
    <property type="molecule type" value="Genomic_DNA"/>
</dbReference>
<dbReference type="EMBL" id="BC036658">
    <property type="protein sequence ID" value="AAH36658.1"/>
    <property type="molecule type" value="mRNA"/>
</dbReference>
<dbReference type="CCDS" id="CCDS1379.1">
    <molecule id="P10155-1"/>
</dbReference>
<dbReference type="CCDS" id="CCDS41449.1">
    <molecule id="P10155-5"/>
</dbReference>
<dbReference type="CCDS" id="CCDS41450.2">
    <molecule id="P10155-4"/>
</dbReference>
<dbReference type="CCDS" id="CCDS53451.1">
    <molecule id="P10155-3"/>
</dbReference>
<dbReference type="PIR" id="A31760">
    <property type="entry name" value="A31760"/>
</dbReference>
<dbReference type="RefSeq" id="NP_001035828.1">
    <molecule id="P10155-5"/>
    <property type="nucleotide sequence ID" value="NM_001042369.2"/>
</dbReference>
<dbReference type="RefSeq" id="NP_001035829.2">
    <molecule id="P10155-4"/>
    <property type="nucleotide sequence ID" value="NM_001042370.2"/>
</dbReference>
<dbReference type="RefSeq" id="NP_001166995.1">
    <molecule id="P10155-1"/>
    <property type="nucleotide sequence ID" value="NM_001173524.2"/>
</dbReference>
<dbReference type="RefSeq" id="NP_001166996.1">
    <molecule id="P10155-3"/>
    <property type="nucleotide sequence ID" value="NM_001173525.1"/>
</dbReference>
<dbReference type="RefSeq" id="NP_004591.2">
    <molecule id="P10155-1"/>
    <property type="nucleotide sequence ID" value="NM_004600.5"/>
</dbReference>
<dbReference type="RefSeq" id="XP_006711560.1">
    <molecule id="P10155-1"/>
    <property type="nucleotide sequence ID" value="XM_006711497.4"/>
</dbReference>
<dbReference type="RefSeq" id="XP_016857670.1">
    <molecule id="P10155-1"/>
    <property type="nucleotide sequence ID" value="XM_017002181.3"/>
</dbReference>
<dbReference type="RefSeq" id="XP_016857671.1">
    <molecule id="P10155-1"/>
    <property type="nucleotide sequence ID" value="XM_017002182.2"/>
</dbReference>
<dbReference type="RefSeq" id="XP_047284880.1">
    <molecule id="P10155-1"/>
    <property type="nucleotide sequence ID" value="XM_047428924.1"/>
</dbReference>
<dbReference type="RefSeq" id="XP_054194447.1">
    <molecule id="P10155-1"/>
    <property type="nucleotide sequence ID" value="XM_054338472.1"/>
</dbReference>
<dbReference type="RefSeq" id="XP_054194448.1">
    <molecule id="P10155-1"/>
    <property type="nucleotide sequence ID" value="XM_054338473.1"/>
</dbReference>
<dbReference type="RefSeq" id="XP_054194449.1">
    <molecule id="P10155-1"/>
    <property type="nucleotide sequence ID" value="XM_054338474.1"/>
</dbReference>
<dbReference type="SMR" id="P10155"/>
<dbReference type="BioGRID" id="112616">
    <property type="interactions" value="214"/>
</dbReference>
<dbReference type="CORUM" id="P10155"/>
<dbReference type="FunCoup" id="P10155">
    <property type="interactions" value="2987"/>
</dbReference>
<dbReference type="IntAct" id="P10155">
    <property type="interactions" value="105"/>
</dbReference>
<dbReference type="MINT" id="P10155"/>
<dbReference type="STRING" id="9606.ENSP00000356416"/>
<dbReference type="GlyCosmos" id="P10155">
    <property type="glycosylation" value="1 site, 2 glycans"/>
</dbReference>
<dbReference type="GlyGen" id="P10155">
    <property type="glycosylation" value="1 site, 2 O-linked glycans (1 site)"/>
</dbReference>
<dbReference type="iPTMnet" id="P10155"/>
<dbReference type="MetOSite" id="P10155"/>
<dbReference type="PhosphoSitePlus" id="P10155"/>
<dbReference type="SwissPalm" id="P10155"/>
<dbReference type="BioMuta" id="TROVE2"/>
<dbReference type="DMDM" id="52788235"/>
<dbReference type="jPOST" id="P10155"/>
<dbReference type="MassIVE" id="P10155"/>
<dbReference type="PaxDb" id="9606-ENSP00000356416"/>
<dbReference type="PeptideAtlas" id="P10155"/>
<dbReference type="ProteomicsDB" id="52574">
    <molecule id="P10155-1"/>
</dbReference>
<dbReference type="ProteomicsDB" id="52575">
    <molecule id="P10155-2"/>
</dbReference>
<dbReference type="ProteomicsDB" id="63552"/>
<dbReference type="ProteomicsDB" id="63553"/>
<dbReference type="ProteomicsDB" id="63554"/>
<dbReference type="Pumba" id="P10155"/>
<dbReference type="Antibodypedia" id="1048">
    <property type="antibodies" value="384 antibodies from 36 providers"/>
</dbReference>
<dbReference type="DNASU" id="6738"/>
<dbReference type="Ensembl" id="ENST00000367441.1">
    <molecule id="P10155-1"/>
    <property type="protein sequence ID" value="ENSP00000356411.1"/>
    <property type="gene ID" value="ENSG00000116747.13"/>
</dbReference>
<dbReference type="Ensembl" id="ENST00000367443.5">
    <molecule id="P10155-3"/>
    <property type="protein sequence ID" value="ENSP00000356413.1"/>
    <property type="gene ID" value="ENSG00000116747.13"/>
</dbReference>
<dbReference type="Ensembl" id="ENST00000367444.7">
    <molecule id="P10155-5"/>
    <property type="protein sequence ID" value="ENSP00000356414.3"/>
    <property type="gene ID" value="ENSG00000116747.13"/>
</dbReference>
<dbReference type="Ensembl" id="ENST00000367445.7">
    <molecule id="P10155-4"/>
    <property type="protein sequence ID" value="ENSP00000356415.3"/>
    <property type="gene ID" value="ENSG00000116747.13"/>
</dbReference>
<dbReference type="Ensembl" id="ENST00000367446.7">
    <molecule id="P10155-1"/>
    <property type="protein sequence ID" value="ENSP00000356416.3"/>
    <property type="gene ID" value="ENSG00000116747.13"/>
</dbReference>
<dbReference type="Ensembl" id="ENST00000400968.7">
    <molecule id="P10155-1"/>
    <property type="protein sequence ID" value="ENSP00000383752.2"/>
    <property type="gene ID" value="ENSG00000116747.13"/>
</dbReference>
<dbReference type="GeneID" id="6738"/>
<dbReference type="KEGG" id="hsa:6738"/>
<dbReference type="MANE-Select" id="ENST00000400968.7">
    <property type="protein sequence ID" value="ENSP00000383752.2"/>
    <property type="RefSeq nucleotide sequence ID" value="NM_001173524.2"/>
    <property type="RefSeq protein sequence ID" value="NP_001166995.1"/>
</dbReference>
<dbReference type="UCSC" id="uc001gss.4">
    <molecule id="P10155-1"/>
    <property type="organism name" value="human"/>
</dbReference>
<dbReference type="AGR" id="HGNC:11313"/>
<dbReference type="CTD" id="6738"/>
<dbReference type="DisGeNET" id="6738"/>
<dbReference type="GeneCards" id="RO60"/>
<dbReference type="HGNC" id="HGNC:11313">
    <property type="gene designation" value="RO60"/>
</dbReference>
<dbReference type="HPA" id="ENSG00000116747">
    <property type="expression patterns" value="Low tissue specificity"/>
</dbReference>
<dbReference type="MIM" id="600063">
    <property type="type" value="gene"/>
</dbReference>
<dbReference type="neXtProt" id="NX_P10155"/>
<dbReference type="OpenTargets" id="ENSG00000116747"/>
<dbReference type="PharmGKB" id="PA36137"/>
<dbReference type="VEuPathDB" id="HostDB:ENSG00000116747"/>
<dbReference type="eggNOG" id="KOG4465">
    <property type="taxonomic scope" value="Eukaryota"/>
</dbReference>
<dbReference type="GeneTree" id="ENSGT00390000006200"/>
<dbReference type="HOGENOM" id="CLU_024421_1_0_1"/>
<dbReference type="InParanoid" id="P10155"/>
<dbReference type="OMA" id="WWYEWLK"/>
<dbReference type="OrthoDB" id="6098064at2759"/>
<dbReference type="PAN-GO" id="P10155">
    <property type="GO annotations" value="2 GO annotations based on evolutionary models"/>
</dbReference>
<dbReference type="PhylomeDB" id="P10155"/>
<dbReference type="TreeFam" id="TF105990"/>
<dbReference type="PathwayCommons" id="P10155"/>
<dbReference type="SignaLink" id="P10155"/>
<dbReference type="BioGRID-ORCS" id="6738">
    <property type="hits" value="8 hits in 1159 CRISPR screens"/>
</dbReference>
<dbReference type="CD-CODE" id="DEE660B4">
    <property type="entry name" value="Stress granule"/>
</dbReference>
<dbReference type="CD-CODE" id="F85A2E29">
    <property type="entry name" value="IMP1 RNP granule"/>
</dbReference>
<dbReference type="ChiTaRS" id="TROVE2">
    <property type="organism name" value="human"/>
</dbReference>
<dbReference type="GeneWiki" id="TROVE2"/>
<dbReference type="GenomeRNAi" id="6738"/>
<dbReference type="Pharos" id="P10155">
    <property type="development level" value="Tbio"/>
</dbReference>
<dbReference type="PRO" id="PR:P10155"/>
<dbReference type="Proteomes" id="UP000005640">
    <property type="component" value="Chromosome 1"/>
</dbReference>
<dbReference type="RNAct" id="P10155">
    <property type="molecule type" value="protein"/>
</dbReference>
<dbReference type="Bgee" id="ENSG00000116747">
    <property type="expression patterns" value="Expressed in nipple and 210 other cell types or tissues"/>
</dbReference>
<dbReference type="ExpressionAtlas" id="P10155">
    <property type="expression patterns" value="baseline and differential"/>
</dbReference>
<dbReference type="GO" id="GO:0005929">
    <property type="term" value="C:cilium"/>
    <property type="evidence" value="ECO:0000314"/>
    <property type="project" value="HPA"/>
</dbReference>
<dbReference type="GO" id="GO:0005829">
    <property type="term" value="C:cytosol"/>
    <property type="evidence" value="ECO:0000314"/>
    <property type="project" value="HPA"/>
</dbReference>
<dbReference type="GO" id="GO:0016604">
    <property type="term" value="C:nuclear body"/>
    <property type="evidence" value="ECO:0000314"/>
    <property type="project" value="HPA"/>
</dbReference>
<dbReference type="GO" id="GO:0005654">
    <property type="term" value="C:nucleoplasm"/>
    <property type="evidence" value="ECO:0000314"/>
    <property type="project" value="HPA"/>
</dbReference>
<dbReference type="GO" id="GO:1990904">
    <property type="term" value="C:ribonucleoprotein complex"/>
    <property type="evidence" value="ECO:0000314"/>
    <property type="project" value="UniProtKB"/>
</dbReference>
<dbReference type="GO" id="GO:0046872">
    <property type="term" value="F:metal ion binding"/>
    <property type="evidence" value="ECO:0007669"/>
    <property type="project" value="UniProtKB-KW"/>
</dbReference>
<dbReference type="GO" id="GO:0003723">
    <property type="term" value="F:RNA binding"/>
    <property type="evidence" value="ECO:0000314"/>
    <property type="project" value="UniProtKB"/>
</dbReference>
<dbReference type="GO" id="GO:0030620">
    <property type="term" value="F:U2 snRNA binding"/>
    <property type="evidence" value="ECO:0007669"/>
    <property type="project" value="Ensembl"/>
</dbReference>
<dbReference type="GO" id="GO:0035457">
    <property type="term" value="P:cellular response to interferon-alpha"/>
    <property type="evidence" value="ECO:0000314"/>
    <property type="project" value="UniProtKB"/>
</dbReference>
<dbReference type="GO" id="GO:0060271">
    <property type="term" value="P:cilium assembly"/>
    <property type="evidence" value="ECO:0007669"/>
    <property type="project" value="Ensembl"/>
</dbReference>
<dbReference type="GO" id="GO:0002520">
    <property type="term" value="P:immune system development"/>
    <property type="evidence" value="ECO:0007669"/>
    <property type="project" value="Ensembl"/>
</dbReference>
<dbReference type="GO" id="GO:0010468">
    <property type="term" value="P:regulation of gene expression"/>
    <property type="evidence" value="ECO:0000314"/>
    <property type="project" value="UniProtKB"/>
</dbReference>
<dbReference type="GO" id="GO:0009411">
    <property type="term" value="P:response to UV"/>
    <property type="evidence" value="ECO:0007669"/>
    <property type="project" value="Ensembl"/>
</dbReference>
<dbReference type="GO" id="GO:0007224">
    <property type="term" value="P:smoothened signaling pathway"/>
    <property type="evidence" value="ECO:0007669"/>
    <property type="project" value="Ensembl"/>
</dbReference>
<dbReference type="GO" id="GO:0006383">
    <property type="term" value="P:transcription by RNA polymerase III"/>
    <property type="evidence" value="ECO:0000304"/>
    <property type="project" value="ProtInc"/>
</dbReference>
<dbReference type="FunFam" id="3.40.50.410:FF:000033">
    <property type="entry name" value="60 kDa SS-A/Ro ribonucleoprotein"/>
    <property type="match status" value="1"/>
</dbReference>
<dbReference type="FunFam" id="3.40.50.410:FF:000040">
    <property type="entry name" value="60 kDa SS-A/Ro ribonucleoprotein isoform X1"/>
    <property type="match status" value="1"/>
</dbReference>
<dbReference type="Gene3D" id="3.40.50.410">
    <property type="entry name" value="von Willebrand factor, type A domain"/>
    <property type="match status" value="2"/>
</dbReference>
<dbReference type="InterPro" id="IPR040322">
    <property type="entry name" value="TROVE2"/>
</dbReference>
<dbReference type="InterPro" id="IPR008858">
    <property type="entry name" value="TROVE_dom"/>
</dbReference>
<dbReference type="InterPro" id="IPR037214">
    <property type="entry name" value="TROVE_dom_sf"/>
</dbReference>
<dbReference type="InterPro" id="IPR056800">
    <property type="entry name" value="vWA_Ro60"/>
</dbReference>
<dbReference type="InterPro" id="IPR036465">
    <property type="entry name" value="vWFA_dom_sf"/>
</dbReference>
<dbReference type="PANTHER" id="PTHR14202">
    <property type="entry name" value="60 KDA RIBONUCLEOPROTEIN SSA/RO"/>
    <property type="match status" value="1"/>
</dbReference>
<dbReference type="PANTHER" id="PTHR14202:SF0">
    <property type="entry name" value="RNA-BINDING PROTEIN RO60"/>
    <property type="match status" value="1"/>
</dbReference>
<dbReference type="Pfam" id="PF05731">
    <property type="entry name" value="TROVE"/>
    <property type="match status" value="1"/>
</dbReference>
<dbReference type="Pfam" id="PF25045">
    <property type="entry name" value="vWA_Ro60"/>
    <property type="match status" value="1"/>
</dbReference>
<dbReference type="SUPFAM" id="SSF140864">
    <property type="entry name" value="TROVE domain-like"/>
    <property type="match status" value="1"/>
</dbReference>
<dbReference type="SUPFAM" id="SSF53300">
    <property type="entry name" value="vWA-like"/>
    <property type="match status" value="1"/>
</dbReference>
<dbReference type="PROSITE" id="PS50988">
    <property type="entry name" value="TROVE"/>
    <property type="match status" value="1"/>
</dbReference>
<proteinExistence type="evidence at protein level"/>
<name>RO60_HUMAN</name>
<keyword id="KW-0007">Acetylation</keyword>
<keyword id="KW-0025">Alternative splicing</keyword>
<keyword id="KW-0970">Cilium biogenesis/degradation</keyword>
<keyword id="KW-0963">Cytoplasm</keyword>
<keyword id="KW-0903">Direct protein sequencing</keyword>
<keyword id="KW-0479">Metal-binding</keyword>
<keyword id="KW-0597">Phosphoprotein</keyword>
<keyword id="KW-1267">Proteomics identification</keyword>
<keyword id="KW-1185">Reference proteome</keyword>
<keyword id="KW-0677">Repeat</keyword>
<keyword id="KW-0687">Ribonucleoprotein</keyword>
<keyword id="KW-0694">RNA-binding</keyword>
<feature type="chain" id="PRO_0000174169" description="RNA-binding protein RO60">
    <location>
        <begin position="1"/>
        <end position="538"/>
    </location>
</feature>
<feature type="domain" description="TROVE" evidence="4">
    <location>
        <begin position="16"/>
        <end position="369"/>
    </location>
</feature>
<feature type="region of interest" description="RNA-binding" evidence="1">
    <location>
        <begin position="120"/>
        <end position="284"/>
    </location>
</feature>
<feature type="region of interest" description="VWFA-like domain" evidence="1">
    <location>
        <begin position="361"/>
        <end position="538"/>
    </location>
</feature>
<feature type="binding site" evidence="3">
    <location>
        <position position="378"/>
    </location>
    <ligand>
        <name>a divalent metal cation</name>
        <dbReference type="ChEBI" id="CHEBI:60240"/>
    </ligand>
</feature>
<feature type="binding site" evidence="3">
    <location>
        <position position="380"/>
    </location>
    <ligand>
        <name>a divalent metal cation</name>
        <dbReference type="ChEBI" id="CHEBI:60240"/>
    </ligand>
</feature>
<feature type="binding site" evidence="3">
    <location>
        <position position="445"/>
    </location>
    <ligand>
        <name>a divalent metal cation</name>
        <dbReference type="ChEBI" id="CHEBI:60240"/>
    </ligand>
</feature>
<feature type="modified residue" description="N-acetylmethionine" evidence="10 18 21">
    <location>
        <position position="1"/>
    </location>
</feature>
<feature type="modified residue" description="Phosphoserine" evidence="22">
    <location>
        <position position="4"/>
    </location>
</feature>
<feature type="modified residue" description="Phosphoserine" evidence="16 17 20 22">
    <location>
        <position position="19"/>
    </location>
</feature>
<feature type="modified residue" description="N6-acetyllysine" evidence="19">
    <location>
        <position position="224"/>
    </location>
</feature>
<feature type="modified residue" description="N6-acetyllysine" evidence="19">
    <location>
        <position position="359"/>
    </location>
</feature>
<feature type="splice variant" id="VSP_005911" description="In isoform Short." evidence="14">
    <original>LAIVTKYITKG</original>
    <variation>KHKIFIGKKGG</variation>
    <location>
        <begin position="195"/>
        <end position="205"/>
    </location>
</feature>
<feature type="splice variant" id="VSP_005912" description="In isoform Short." evidence="14">
    <location>
        <begin position="206"/>
        <end position="538"/>
    </location>
</feature>
<feature type="splice variant" id="VSP_045262" description="In isoform 3." evidence="13">
    <original>GMLDMCGFDTGALDVIRNFTLDMI</original>
    <variation>DTVK</variation>
    <location>
        <begin position="515"/>
        <end position="538"/>
    </location>
</feature>
<feature type="splice variant" id="VSP_054041" description="In isoform 5." evidence="12">
    <original>GMLDMCGFDTGALDVIRNFTLDMI</original>
    <variation>ALQNTLLNKSF</variation>
    <location>
        <begin position="515"/>
        <end position="538"/>
    </location>
</feature>
<feature type="splice variant" id="VSP_045797" description="In isoform 4." evidence="13">
    <original>VIRNFTLDMI</original>
    <variation>PCKIPY</variation>
    <location>
        <begin position="529"/>
        <end position="538"/>
    </location>
</feature>
<feature type="sequence conflict" description="In Ref. 4; AAO47001/AAO47002." evidence="14" ref="4">
    <original>K</original>
    <variation>R</variation>
    <location>
        <position position="136"/>
    </location>
</feature>
<feature type="sequence conflict" description="In Ref. 1; AAA35493." evidence="14" ref="1">
    <original>R</original>
    <variation>K</variation>
    <location>
        <position position="239"/>
    </location>
</feature>
<evidence type="ECO:0000250" key="1"/>
<evidence type="ECO:0000250" key="2">
    <source>
        <dbReference type="UniProtKB" id="O08848"/>
    </source>
</evidence>
<evidence type="ECO:0000250" key="3">
    <source>
        <dbReference type="UniProtKB" id="P42700"/>
    </source>
</evidence>
<evidence type="ECO:0000255" key="4">
    <source>
        <dbReference type="PROSITE-ProRule" id="PRU00343"/>
    </source>
</evidence>
<evidence type="ECO:0000269" key="5">
    <source>
    </source>
</evidence>
<evidence type="ECO:0000269" key="6">
    <source>
    </source>
</evidence>
<evidence type="ECO:0000269" key="7">
    <source>
    </source>
</evidence>
<evidence type="ECO:0000269" key="8">
    <source>
    </source>
</evidence>
<evidence type="ECO:0000269" key="9">
    <source>
    </source>
</evidence>
<evidence type="ECO:0000269" key="10">
    <source ref="9"/>
</evidence>
<evidence type="ECO:0000303" key="11">
    <source>
    </source>
</evidence>
<evidence type="ECO:0000303" key="12">
    <source>
    </source>
</evidence>
<evidence type="ECO:0000303" key="13">
    <source ref="4"/>
</evidence>
<evidence type="ECO:0000305" key="14"/>
<evidence type="ECO:0000312" key="15">
    <source>
        <dbReference type="HGNC" id="HGNC:11313"/>
    </source>
</evidence>
<evidence type="ECO:0007744" key="16">
    <source>
    </source>
</evidence>
<evidence type="ECO:0007744" key="17">
    <source>
    </source>
</evidence>
<evidence type="ECO:0007744" key="18">
    <source>
    </source>
</evidence>
<evidence type="ECO:0007744" key="19">
    <source>
    </source>
</evidence>
<evidence type="ECO:0007744" key="20">
    <source>
    </source>
</evidence>
<evidence type="ECO:0007744" key="21">
    <source>
    </source>
</evidence>
<evidence type="ECO:0007744" key="22">
    <source>
    </source>
</evidence>
<gene>
    <name evidence="15" type="primary">RO60</name>
    <name evidence="15" type="synonym">SSA2</name>
    <name evidence="15" type="synonym">TROVE2</name>
</gene>
<protein>
    <recommendedName>
        <fullName evidence="15">RNA-binding protein RO60</fullName>
    </recommendedName>
    <alternativeName>
        <fullName evidence="14">60 kDa SS-A/Ro ribonucleoprotein</fullName>
        <shortName>60 kDa Ro protein</shortName>
        <shortName>60 kDa ribonucleoprotein Ro</shortName>
        <shortName>RoRNP</shortName>
    </alternativeName>
    <alternativeName>
        <fullName evidence="11">Ro 60 kDa autoantigen</fullName>
        <shortName evidence="11">Ro60 autoantigen</shortName>
    </alternativeName>
    <alternativeName>
        <fullName evidence="15">Sjoegren syndrome antigen A2</fullName>
    </alternativeName>
    <alternativeName>
        <fullName evidence="12">Sjoegren syndrome type A antigen</fullName>
        <shortName evidence="12">SS-A</shortName>
    </alternativeName>
    <alternativeName>
        <fullName evidence="15">TROVE domain family member 2</fullName>
    </alternativeName>
</protein>
<organism>
    <name type="scientific">Homo sapiens</name>
    <name type="common">Human</name>
    <dbReference type="NCBI Taxonomy" id="9606"/>
    <lineage>
        <taxon>Eukaryota</taxon>
        <taxon>Metazoa</taxon>
        <taxon>Chordata</taxon>
        <taxon>Craniata</taxon>
        <taxon>Vertebrata</taxon>
        <taxon>Euteleostomi</taxon>
        <taxon>Mammalia</taxon>
        <taxon>Eutheria</taxon>
        <taxon>Euarchontoglires</taxon>
        <taxon>Primates</taxon>
        <taxon>Haplorrhini</taxon>
        <taxon>Catarrhini</taxon>
        <taxon>Hominidae</taxon>
        <taxon>Homo</taxon>
    </lineage>
</organism>
<sequence>MEESVNQMQPLNEKQIANSQDGYVWQVTDMNRLHRFLCFGSEGGTYYIKEQKLGLENAEALIRLIEDGRGCEVIQEIKSFSQEGRTTKQEPMLFALAICSQCSDISTKQAAFKAVSEVCRIPTHLFTFIQFKKDLKESMKCGMWGRALRKAIADWYNEKGGMALALAVTKYKQRNGWSHKDLLRLSHLKPSSEGLAIVTKYITKGWKEVHELYKEKALSVETEKLLKYLEAVEKVKRTRDELEVIHLIEEHRLVREHLLTNHLKSKEVWKALLQEMPLTALLRNLGKMTANSVLEPGNSEVSLVCEKLCNEKLLKKARIHPFHILIALETYKTGHGLRGKLKWRPDEEILKALDAAFYKTFKTVEPTGKRFLLAVDVSASMNQRVLGSILNASTVAAAMCMVVTRTEKDSYVVAFSDEMVPCPVTTDMTLQQVLMAMSQIPAGGTDCSLPMIWAQKTNTPADVFIVFTDNETFAGGVHPAIALREYRKKMDIPAKLIVCGMTSNGFTIADPDDRGMLDMCGFDTGALDVIRNFTLDMI</sequence>
<accession>P10155</accession>
<accession>B2RBB9</accession>
<accession>Q5LJ98</accession>
<accession>Q5LJ99</accession>
<accession>Q5LJA0</accession>
<accession>Q86WL3</accession>
<accession>Q86WL4</accession>
<accession>Q92787</accession>
<accession>Q9H1W6</accession>
<reference key="1">
    <citation type="journal article" date="1988" name="Proc. Natl. Acad. Sci. U.S.A.">
        <title>Molecular analysis of the 60-kDa human Ro ribonucleoprotein.</title>
        <authorList>
            <person name="Deutscher S.L."/>
            <person name="Harley J.B."/>
            <person name="Keene J.D."/>
        </authorList>
    </citation>
    <scope>NUCLEOTIDE SEQUENCE [MRNA] (ISOFORM LONG)</scope>
</reference>
<reference key="2">
    <citation type="journal article" date="1989" name="J. Clin. Invest.">
        <title>Isolation and characterization of a cDNA clone encoding the 60-kD component of the human SS-A/Ro ribonucleoprotein autoantigen.</title>
        <authorList>
            <person name="Ben-Chetrit E."/>
            <person name="Gandy B.J."/>
            <person name="Tan E.M."/>
            <person name="Sulivan K.F."/>
        </authorList>
    </citation>
    <scope>NUCLEOTIDE SEQUENCE [MRNA] (ISOFORM 5)</scope>
</reference>
<reference key="3">
    <citation type="submission" date="1996-10" db="EMBL/GenBank/DDBJ databases">
        <title>Identification and characterization of an alternative mRNA transcript of the 60-kD SS-A/Ro ribonucleoprotein encoding the N-terminal RNA binding domain alone.</title>
        <authorList>
            <person name="Buyon J.P."/>
            <person name="DiDonato F."/>
            <person name="Tseng C.E."/>
            <person name="Rashbaum W."/>
            <person name="Morris A."/>
            <person name="Hamel J.C."/>
            <person name="Chan E.K.L."/>
        </authorList>
    </citation>
    <scope>NUCLEOTIDE SEQUENCE [GENOMIC DNA] (ISOFORM SHORT)</scope>
</reference>
<reference key="4">
    <citation type="submission" date="2002-12" db="EMBL/GenBank/DDBJ databases">
        <title>A variant of the 60-kD component of the human SS-A/Ro ribonucleoprotein autoantigen involved in multidrug resistance of gastric cancer cells.</title>
        <authorList>
            <person name="Han Q."/>
            <person name="Wang X."/>
            <person name="Shi Y."/>
            <person name="Ding J."/>
            <person name="Fan D."/>
        </authorList>
    </citation>
    <scope>NUCLEOTIDE SEQUENCE [MRNA] (ISOFORMS 3 AND 4)</scope>
</reference>
<reference key="5">
    <citation type="journal article" date="2004" name="Nat. Genet.">
        <title>Complete sequencing and characterization of 21,243 full-length human cDNAs.</title>
        <authorList>
            <person name="Ota T."/>
            <person name="Suzuki Y."/>
            <person name="Nishikawa T."/>
            <person name="Otsuki T."/>
            <person name="Sugiyama T."/>
            <person name="Irie R."/>
            <person name="Wakamatsu A."/>
            <person name="Hayashi K."/>
            <person name="Sato H."/>
            <person name="Nagai K."/>
            <person name="Kimura K."/>
            <person name="Makita H."/>
            <person name="Sekine M."/>
            <person name="Obayashi M."/>
            <person name="Nishi T."/>
            <person name="Shibahara T."/>
            <person name="Tanaka T."/>
            <person name="Ishii S."/>
            <person name="Yamamoto J."/>
            <person name="Saito K."/>
            <person name="Kawai Y."/>
            <person name="Isono Y."/>
            <person name="Nakamura Y."/>
            <person name="Nagahari K."/>
            <person name="Murakami K."/>
            <person name="Yasuda T."/>
            <person name="Iwayanagi T."/>
            <person name="Wagatsuma M."/>
            <person name="Shiratori A."/>
            <person name="Sudo H."/>
            <person name="Hosoiri T."/>
            <person name="Kaku Y."/>
            <person name="Kodaira H."/>
            <person name="Kondo H."/>
            <person name="Sugawara M."/>
            <person name="Takahashi M."/>
            <person name="Kanda K."/>
            <person name="Yokoi T."/>
            <person name="Furuya T."/>
            <person name="Kikkawa E."/>
            <person name="Omura Y."/>
            <person name="Abe K."/>
            <person name="Kamihara K."/>
            <person name="Katsuta N."/>
            <person name="Sato K."/>
            <person name="Tanikawa M."/>
            <person name="Yamazaki M."/>
            <person name="Ninomiya K."/>
            <person name="Ishibashi T."/>
            <person name="Yamashita H."/>
            <person name="Murakawa K."/>
            <person name="Fujimori K."/>
            <person name="Tanai H."/>
            <person name="Kimata M."/>
            <person name="Watanabe M."/>
            <person name="Hiraoka S."/>
            <person name="Chiba Y."/>
            <person name="Ishida S."/>
            <person name="Ono Y."/>
            <person name="Takiguchi S."/>
            <person name="Watanabe S."/>
            <person name="Yosida M."/>
            <person name="Hotuta T."/>
            <person name="Kusano J."/>
            <person name="Kanehori K."/>
            <person name="Takahashi-Fujii A."/>
            <person name="Hara H."/>
            <person name="Tanase T.-O."/>
            <person name="Nomura Y."/>
            <person name="Togiya S."/>
            <person name="Komai F."/>
            <person name="Hara R."/>
            <person name="Takeuchi K."/>
            <person name="Arita M."/>
            <person name="Imose N."/>
            <person name="Musashino K."/>
            <person name="Yuuki H."/>
            <person name="Oshima A."/>
            <person name="Sasaki N."/>
            <person name="Aotsuka S."/>
            <person name="Yoshikawa Y."/>
            <person name="Matsunawa H."/>
            <person name="Ichihara T."/>
            <person name="Shiohata N."/>
            <person name="Sano S."/>
            <person name="Moriya S."/>
            <person name="Momiyama H."/>
            <person name="Satoh N."/>
            <person name="Takami S."/>
            <person name="Terashima Y."/>
            <person name="Suzuki O."/>
            <person name="Nakagawa S."/>
            <person name="Senoh A."/>
            <person name="Mizoguchi H."/>
            <person name="Goto Y."/>
            <person name="Shimizu F."/>
            <person name="Wakebe H."/>
            <person name="Hishigaki H."/>
            <person name="Watanabe T."/>
            <person name="Sugiyama A."/>
            <person name="Takemoto M."/>
            <person name="Kawakami B."/>
            <person name="Yamazaki M."/>
            <person name="Watanabe K."/>
            <person name="Kumagai A."/>
            <person name="Itakura S."/>
            <person name="Fukuzumi Y."/>
            <person name="Fujimori Y."/>
            <person name="Komiyama M."/>
            <person name="Tashiro H."/>
            <person name="Tanigami A."/>
            <person name="Fujiwara T."/>
            <person name="Ono T."/>
            <person name="Yamada K."/>
            <person name="Fujii Y."/>
            <person name="Ozaki K."/>
            <person name="Hirao M."/>
            <person name="Ohmori Y."/>
            <person name="Kawabata A."/>
            <person name="Hikiji T."/>
            <person name="Kobatake N."/>
            <person name="Inagaki H."/>
            <person name="Ikema Y."/>
            <person name="Okamoto S."/>
            <person name="Okitani R."/>
            <person name="Kawakami T."/>
            <person name="Noguchi S."/>
            <person name="Itoh T."/>
            <person name="Shigeta K."/>
            <person name="Senba T."/>
            <person name="Matsumura K."/>
            <person name="Nakajima Y."/>
            <person name="Mizuno T."/>
            <person name="Morinaga M."/>
            <person name="Sasaki M."/>
            <person name="Togashi T."/>
            <person name="Oyama M."/>
            <person name="Hata H."/>
            <person name="Watanabe M."/>
            <person name="Komatsu T."/>
            <person name="Mizushima-Sugano J."/>
            <person name="Satoh T."/>
            <person name="Shirai Y."/>
            <person name="Takahashi Y."/>
            <person name="Nakagawa K."/>
            <person name="Okumura K."/>
            <person name="Nagase T."/>
            <person name="Nomura N."/>
            <person name="Kikuchi H."/>
            <person name="Masuho Y."/>
            <person name="Yamashita R."/>
            <person name="Nakai K."/>
            <person name="Yada T."/>
            <person name="Nakamura Y."/>
            <person name="Ohara O."/>
            <person name="Isogai T."/>
            <person name="Sugano S."/>
        </authorList>
    </citation>
    <scope>NUCLEOTIDE SEQUENCE [LARGE SCALE MRNA] (ISOFORM LONG)</scope>
    <source>
        <tissue>Thalamus</tissue>
    </source>
</reference>
<reference key="6">
    <citation type="journal article" date="2006" name="Nature">
        <title>The DNA sequence and biological annotation of human chromosome 1.</title>
        <authorList>
            <person name="Gregory S.G."/>
            <person name="Barlow K.F."/>
            <person name="McLay K.E."/>
            <person name="Kaul R."/>
            <person name="Swarbreck D."/>
            <person name="Dunham A."/>
            <person name="Scott C.E."/>
            <person name="Howe K.L."/>
            <person name="Woodfine K."/>
            <person name="Spencer C.C.A."/>
            <person name="Jones M.C."/>
            <person name="Gillson C."/>
            <person name="Searle S."/>
            <person name="Zhou Y."/>
            <person name="Kokocinski F."/>
            <person name="McDonald L."/>
            <person name="Evans R."/>
            <person name="Phillips K."/>
            <person name="Atkinson A."/>
            <person name="Cooper R."/>
            <person name="Jones C."/>
            <person name="Hall R.E."/>
            <person name="Andrews T.D."/>
            <person name="Lloyd C."/>
            <person name="Ainscough R."/>
            <person name="Almeida J.P."/>
            <person name="Ambrose K.D."/>
            <person name="Anderson F."/>
            <person name="Andrew R.W."/>
            <person name="Ashwell R.I.S."/>
            <person name="Aubin K."/>
            <person name="Babbage A.K."/>
            <person name="Bagguley C.L."/>
            <person name="Bailey J."/>
            <person name="Beasley H."/>
            <person name="Bethel G."/>
            <person name="Bird C.P."/>
            <person name="Bray-Allen S."/>
            <person name="Brown J.Y."/>
            <person name="Brown A.J."/>
            <person name="Buckley D."/>
            <person name="Burton J."/>
            <person name="Bye J."/>
            <person name="Carder C."/>
            <person name="Chapman J.C."/>
            <person name="Clark S.Y."/>
            <person name="Clarke G."/>
            <person name="Clee C."/>
            <person name="Cobley V."/>
            <person name="Collier R.E."/>
            <person name="Corby N."/>
            <person name="Coville G.J."/>
            <person name="Davies J."/>
            <person name="Deadman R."/>
            <person name="Dunn M."/>
            <person name="Earthrowl M."/>
            <person name="Ellington A.G."/>
            <person name="Errington H."/>
            <person name="Frankish A."/>
            <person name="Frankland J."/>
            <person name="French L."/>
            <person name="Garner P."/>
            <person name="Garnett J."/>
            <person name="Gay L."/>
            <person name="Ghori M.R.J."/>
            <person name="Gibson R."/>
            <person name="Gilby L.M."/>
            <person name="Gillett W."/>
            <person name="Glithero R.J."/>
            <person name="Grafham D.V."/>
            <person name="Griffiths C."/>
            <person name="Griffiths-Jones S."/>
            <person name="Grocock R."/>
            <person name="Hammond S."/>
            <person name="Harrison E.S.I."/>
            <person name="Hart E."/>
            <person name="Haugen E."/>
            <person name="Heath P.D."/>
            <person name="Holmes S."/>
            <person name="Holt K."/>
            <person name="Howden P.J."/>
            <person name="Hunt A.R."/>
            <person name="Hunt S.E."/>
            <person name="Hunter G."/>
            <person name="Isherwood J."/>
            <person name="James R."/>
            <person name="Johnson C."/>
            <person name="Johnson D."/>
            <person name="Joy A."/>
            <person name="Kay M."/>
            <person name="Kershaw J.K."/>
            <person name="Kibukawa M."/>
            <person name="Kimberley A.M."/>
            <person name="King A."/>
            <person name="Knights A.J."/>
            <person name="Lad H."/>
            <person name="Laird G."/>
            <person name="Lawlor S."/>
            <person name="Leongamornlert D.A."/>
            <person name="Lloyd D.M."/>
            <person name="Loveland J."/>
            <person name="Lovell J."/>
            <person name="Lush M.J."/>
            <person name="Lyne R."/>
            <person name="Martin S."/>
            <person name="Mashreghi-Mohammadi M."/>
            <person name="Matthews L."/>
            <person name="Matthews N.S.W."/>
            <person name="McLaren S."/>
            <person name="Milne S."/>
            <person name="Mistry S."/>
            <person name="Moore M.J.F."/>
            <person name="Nickerson T."/>
            <person name="O'Dell C.N."/>
            <person name="Oliver K."/>
            <person name="Palmeiri A."/>
            <person name="Palmer S.A."/>
            <person name="Parker A."/>
            <person name="Patel D."/>
            <person name="Pearce A.V."/>
            <person name="Peck A.I."/>
            <person name="Pelan S."/>
            <person name="Phelps K."/>
            <person name="Phillimore B.J."/>
            <person name="Plumb R."/>
            <person name="Rajan J."/>
            <person name="Raymond C."/>
            <person name="Rouse G."/>
            <person name="Saenphimmachak C."/>
            <person name="Sehra H.K."/>
            <person name="Sheridan E."/>
            <person name="Shownkeen R."/>
            <person name="Sims S."/>
            <person name="Skuce C.D."/>
            <person name="Smith M."/>
            <person name="Steward C."/>
            <person name="Subramanian S."/>
            <person name="Sycamore N."/>
            <person name="Tracey A."/>
            <person name="Tromans A."/>
            <person name="Van Helmond Z."/>
            <person name="Wall M."/>
            <person name="Wallis J.M."/>
            <person name="White S."/>
            <person name="Whitehead S.L."/>
            <person name="Wilkinson J.E."/>
            <person name="Willey D.L."/>
            <person name="Williams H."/>
            <person name="Wilming L."/>
            <person name="Wray P.W."/>
            <person name="Wu Z."/>
            <person name="Coulson A."/>
            <person name="Vaudin M."/>
            <person name="Sulston J.E."/>
            <person name="Durbin R.M."/>
            <person name="Hubbard T."/>
            <person name="Wooster R."/>
            <person name="Dunham I."/>
            <person name="Carter N.P."/>
            <person name="McVean G."/>
            <person name="Ross M.T."/>
            <person name="Harrow J."/>
            <person name="Olson M.V."/>
            <person name="Beck S."/>
            <person name="Rogers J."/>
            <person name="Bentley D.R."/>
        </authorList>
    </citation>
    <scope>NUCLEOTIDE SEQUENCE [LARGE SCALE GENOMIC DNA]</scope>
</reference>
<reference key="7">
    <citation type="submission" date="2005-07" db="EMBL/GenBank/DDBJ databases">
        <authorList>
            <person name="Mural R.J."/>
            <person name="Istrail S."/>
            <person name="Sutton G.G."/>
            <person name="Florea L."/>
            <person name="Halpern A.L."/>
            <person name="Mobarry C.M."/>
            <person name="Lippert R."/>
            <person name="Walenz B."/>
            <person name="Shatkay H."/>
            <person name="Dew I."/>
            <person name="Miller J.R."/>
            <person name="Flanigan M.J."/>
            <person name="Edwards N.J."/>
            <person name="Bolanos R."/>
            <person name="Fasulo D."/>
            <person name="Halldorsson B.V."/>
            <person name="Hannenhalli S."/>
            <person name="Turner R."/>
            <person name="Yooseph S."/>
            <person name="Lu F."/>
            <person name="Nusskern D.R."/>
            <person name="Shue B.C."/>
            <person name="Zheng X.H."/>
            <person name="Zhong F."/>
            <person name="Delcher A.L."/>
            <person name="Huson D.H."/>
            <person name="Kravitz S.A."/>
            <person name="Mouchard L."/>
            <person name="Reinert K."/>
            <person name="Remington K.A."/>
            <person name="Clark A.G."/>
            <person name="Waterman M.S."/>
            <person name="Eichler E.E."/>
            <person name="Adams M.D."/>
            <person name="Hunkapiller M.W."/>
            <person name="Myers E.W."/>
            <person name="Venter J.C."/>
        </authorList>
    </citation>
    <scope>NUCLEOTIDE SEQUENCE [LARGE SCALE GENOMIC DNA]</scope>
</reference>
<reference key="8">
    <citation type="journal article" date="2004" name="Genome Res.">
        <title>The status, quality, and expansion of the NIH full-length cDNA project: the Mammalian Gene Collection (MGC).</title>
        <authorList>
            <consortium name="The MGC Project Team"/>
        </authorList>
    </citation>
    <scope>NUCLEOTIDE SEQUENCE [LARGE SCALE MRNA] (ISOFORM LONG)</scope>
    <source>
        <tissue>Testis</tissue>
    </source>
</reference>
<reference key="9">
    <citation type="submission" date="2009-02" db="UniProtKB">
        <authorList>
            <person name="Bienvenut W.V."/>
            <person name="Sumpton D.P."/>
            <person name="Lilla S."/>
            <person name="Ozanne B.W."/>
        </authorList>
    </citation>
    <scope>PROTEIN SEQUENCE OF 1-14; 271-283 AND 352-359</scope>
    <scope>CLEAVAGE OF INITIATOR METHIONINE</scope>
    <scope>ACETYLATION AT MET-1</scope>
    <scope>IDENTIFICATION BY MASS SPECTROMETRY</scope>
    <source>
        <tissue>Pre-B cell</tissue>
    </source>
</reference>
<reference key="10">
    <citation type="journal article" date="1999" name="J. Clin. Invest.">
        <title>Defining a novel 75-kDa phosphoprotein associated with SS-A/Ro and identification of distinct human autoantibodies.</title>
        <authorList>
            <person name="Wang D."/>
            <person name="Buyon J.P."/>
            <person name="Zhu W."/>
            <person name="Chan E.K.L."/>
        </authorList>
    </citation>
    <scope>INTERACTION WITH RAB11FIP5</scope>
    <source>
        <tissue>Keratinocyte</tissue>
    </source>
</reference>
<reference key="11">
    <citation type="journal article" date="2000" name="RNA">
        <title>Interaction cloning and characterization of RoBPI, a novel protein binding to human Ro ribonucleoproteins.</title>
        <authorList>
            <person name="Bouffard P."/>
            <person name="Barbar E."/>
            <person name="Briere F."/>
            <person name="Boire G."/>
        </authorList>
    </citation>
    <scope>IDENTIFICATION IN A COMPLEX WITH PUF60 AND Y5 RNA</scope>
</reference>
<reference key="12">
    <citation type="journal article" date="2007" name="Genes Dev.">
        <title>Human Y5 RNA specializes a Ro ribonucleoprotein for 5S ribosomal RNA quality control.</title>
        <authorList>
            <person name="Hogg J.R."/>
            <person name="Collins K."/>
        </authorList>
    </citation>
    <scope>FUNCTION</scope>
</reference>
<reference key="13">
    <citation type="journal article" date="2007" name="Mol. Cell. Proteomics">
        <title>Molecular composition of IMP1 ribonucleoprotein granules.</title>
        <authorList>
            <person name="Joeson L."/>
            <person name="Vikesaa J."/>
            <person name="Krogh A."/>
            <person name="Nielsen L.K."/>
            <person name="Hansen T."/>
            <person name="Borup R."/>
            <person name="Johnsen A.H."/>
            <person name="Christiansen J."/>
            <person name="Nielsen F.C."/>
        </authorList>
    </citation>
    <scope>IDENTIFICATION IN A MRNP GRANULE COMPLEX</scope>
    <scope>SUBCELLULAR LOCATION</scope>
</reference>
<reference key="14">
    <citation type="journal article" date="2007" name="Science">
        <title>ATM and ATR substrate analysis reveals extensive protein networks responsive to DNA damage.</title>
        <authorList>
            <person name="Matsuoka S."/>
            <person name="Ballif B.A."/>
            <person name="Smogorzewska A."/>
            <person name="McDonald E.R. III"/>
            <person name="Hurov K.E."/>
            <person name="Luo J."/>
            <person name="Bakalarski C.E."/>
            <person name="Zhao Z."/>
            <person name="Solimini N."/>
            <person name="Lerenthal Y."/>
            <person name="Shiloh Y."/>
            <person name="Gygi S.P."/>
            <person name="Elledge S.J."/>
        </authorList>
    </citation>
    <scope>IDENTIFICATION BY MASS SPECTROMETRY [LARGE SCALE ANALYSIS]</scope>
    <source>
        <tissue>Embryonic kidney</tissue>
    </source>
</reference>
<reference key="15">
    <citation type="journal article" date="2008" name="Mol. Cell">
        <title>Kinase-selective enrichment enables quantitative phosphoproteomics of the kinome across the cell cycle.</title>
        <authorList>
            <person name="Daub H."/>
            <person name="Olsen J.V."/>
            <person name="Bairlein M."/>
            <person name="Gnad F."/>
            <person name="Oppermann F.S."/>
            <person name="Korner R."/>
            <person name="Greff Z."/>
            <person name="Keri G."/>
            <person name="Stemmann O."/>
            <person name="Mann M."/>
        </authorList>
    </citation>
    <scope>PHOSPHORYLATION [LARGE SCALE ANALYSIS] AT SER-19</scope>
    <scope>IDENTIFICATION BY MASS SPECTROMETRY [LARGE SCALE ANALYSIS]</scope>
    <source>
        <tissue>Cervix carcinoma</tissue>
    </source>
</reference>
<reference key="16">
    <citation type="journal article" date="2008" name="Proc. Natl. Acad. Sci. U.S.A.">
        <title>A quantitative atlas of mitotic phosphorylation.</title>
        <authorList>
            <person name="Dephoure N."/>
            <person name="Zhou C."/>
            <person name="Villen J."/>
            <person name="Beausoleil S.A."/>
            <person name="Bakalarski C.E."/>
            <person name="Elledge S.J."/>
            <person name="Gygi S.P."/>
        </authorList>
    </citation>
    <scope>PHOSPHORYLATION [LARGE SCALE ANALYSIS] AT SER-19</scope>
    <scope>IDENTIFICATION BY MASS SPECTROMETRY [LARGE SCALE ANALYSIS]</scope>
    <source>
        <tissue>Cervix carcinoma</tissue>
    </source>
</reference>
<reference key="17">
    <citation type="journal article" date="2009" name="Anal. Chem.">
        <title>Lys-N and trypsin cover complementary parts of the phosphoproteome in a refined SCX-based approach.</title>
        <authorList>
            <person name="Gauci S."/>
            <person name="Helbig A.O."/>
            <person name="Slijper M."/>
            <person name="Krijgsveld J."/>
            <person name="Heck A.J."/>
            <person name="Mohammed S."/>
        </authorList>
    </citation>
    <scope>ACETYLATION [LARGE SCALE ANALYSIS] AT MET-1</scope>
    <scope>IDENTIFICATION BY MASS SPECTROMETRY [LARGE SCALE ANALYSIS]</scope>
</reference>
<reference key="18">
    <citation type="journal article" date="2009" name="Science">
        <title>Lysine acetylation targets protein complexes and co-regulates major cellular functions.</title>
        <authorList>
            <person name="Choudhary C."/>
            <person name="Kumar C."/>
            <person name="Gnad F."/>
            <person name="Nielsen M.L."/>
            <person name="Rehman M."/>
            <person name="Walther T.C."/>
            <person name="Olsen J.V."/>
            <person name="Mann M."/>
        </authorList>
    </citation>
    <scope>ACETYLATION [LARGE SCALE ANALYSIS] AT LYS-224 AND LYS-359</scope>
    <scope>IDENTIFICATION BY MASS SPECTROMETRY [LARGE SCALE ANALYSIS]</scope>
</reference>
<reference key="19">
    <citation type="journal article" date="2010" name="Sci. Signal.">
        <title>Quantitative phosphoproteomics reveals widespread full phosphorylation site occupancy during mitosis.</title>
        <authorList>
            <person name="Olsen J.V."/>
            <person name="Vermeulen M."/>
            <person name="Santamaria A."/>
            <person name="Kumar C."/>
            <person name="Miller M.L."/>
            <person name="Jensen L.J."/>
            <person name="Gnad F."/>
            <person name="Cox J."/>
            <person name="Jensen T.S."/>
            <person name="Nigg E.A."/>
            <person name="Brunak S."/>
            <person name="Mann M."/>
        </authorList>
    </citation>
    <scope>PHOSPHORYLATION [LARGE SCALE ANALYSIS] AT SER-19</scope>
    <scope>IDENTIFICATION BY MASS SPECTROMETRY [LARGE SCALE ANALYSIS]</scope>
    <source>
        <tissue>Cervix carcinoma</tissue>
    </source>
</reference>
<reference key="20">
    <citation type="journal article" date="2011" name="BMC Syst. Biol.">
        <title>Initial characterization of the human central proteome.</title>
        <authorList>
            <person name="Burkard T.R."/>
            <person name="Planyavsky M."/>
            <person name="Kaupe I."/>
            <person name="Breitwieser F.P."/>
            <person name="Buerckstuemmer T."/>
            <person name="Bennett K.L."/>
            <person name="Superti-Furga G."/>
            <person name="Colinge J."/>
        </authorList>
    </citation>
    <scope>IDENTIFICATION BY MASS SPECTROMETRY [LARGE SCALE ANALYSIS]</scope>
</reference>
<reference key="21">
    <citation type="journal article" date="2012" name="Mol. Cell. Proteomics">
        <title>Comparative large-scale characterisation of plant vs. mammal proteins reveals similar and idiosyncratic N-alpha acetylation features.</title>
        <authorList>
            <person name="Bienvenut W.V."/>
            <person name="Sumpton D."/>
            <person name="Martinez A."/>
            <person name="Lilla S."/>
            <person name="Espagne C."/>
            <person name="Meinnel T."/>
            <person name="Giglione C."/>
        </authorList>
    </citation>
    <scope>ACETYLATION [LARGE SCALE ANALYSIS] AT MET-1</scope>
    <scope>IDENTIFICATION BY MASS SPECTROMETRY [LARGE SCALE ANALYSIS]</scope>
</reference>
<reference key="22">
    <citation type="journal article" date="2013" name="J. Proteome Res.">
        <title>Toward a comprehensive characterization of a human cancer cell phosphoproteome.</title>
        <authorList>
            <person name="Zhou H."/>
            <person name="Di Palma S."/>
            <person name="Preisinger C."/>
            <person name="Peng M."/>
            <person name="Polat A.N."/>
            <person name="Heck A.J."/>
            <person name="Mohammed S."/>
        </authorList>
    </citation>
    <scope>PHOSPHORYLATION [LARGE SCALE ANALYSIS] AT SER-4 AND SER-19</scope>
    <scope>IDENTIFICATION BY MASS SPECTROMETRY [LARGE SCALE ANALYSIS]</scope>
    <source>
        <tissue>Cervix carcinoma</tissue>
        <tissue>Erythroleukemia</tissue>
    </source>
</reference>
<reference key="23">
    <citation type="journal article" date="2015" name="Science">
        <title>The Ro60 autoantigen binds endogenous retroelements and regulates inflammatory gene expression.</title>
        <authorList>
            <person name="Hung T."/>
            <person name="Pratt G.A."/>
            <person name="Sundararaman B."/>
            <person name="Townsend M.J."/>
            <person name="Chaivorapol C."/>
            <person name="Bhangale T."/>
            <person name="Graham R.R."/>
            <person name="Ortmann W."/>
            <person name="Criswell L.A."/>
            <person name="Yeo G.W."/>
            <person name="Behrens T.W."/>
        </authorList>
    </citation>
    <scope>FUNCTION</scope>
    <scope>RNA-BINDING</scope>
</reference>